<evidence type="ECO:0000255" key="1">
    <source>
        <dbReference type="HAMAP-Rule" id="MF_01393"/>
    </source>
</evidence>
<dbReference type="EMBL" id="CP001191">
    <property type="protein sequence ID" value="ACI53809.1"/>
    <property type="molecule type" value="Genomic_DNA"/>
</dbReference>
<dbReference type="RefSeq" id="WP_003584570.1">
    <property type="nucleotide sequence ID" value="NC_011369.1"/>
</dbReference>
<dbReference type="SMR" id="B5ZS16"/>
<dbReference type="STRING" id="395492.Rleg2_0512"/>
<dbReference type="KEGG" id="rlt:Rleg2_0512"/>
<dbReference type="eggNOG" id="COG0356">
    <property type="taxonomic scope" value="Bacteria"/>
</dbReference>
<dbReference type="HOGENOM" id="CLU_041018_0_2_5"/>
<dbReference type="Proteomes" id="UP000008330">
    <property type="component" value="Chromosome"/>
</dbReference>
<dbReference type="GO" id="GO:0005886">
    <property type="term" value="C:plasma membrane"/>
    <property type="evidence" value="ECO:0007669"/>
    <property type="project" value="UniProtKB-SubCell"/>
</dbReference>
<dbReference type="GO" id="GO:0045259">
    <property type="term" value="C:proton-transporting ATP synthase complex"/>
    <property type="evidence" value="ECO:0007669"/>
    <property type="project" value="UniProtKB-KW"/>
</dbReference>
<dbReference type="GO" id="GO:0046933">
    <property type="term" value="F:proton-transporting ATP synthase activity, rotational mechanism"/>
    <property type="evidence" value="ECO:0007669"/>
    <property type="project" value="UniProtKB-UniRule"/>
</dbReference>
<dbReference type="CDD" id="cd00310">
    <property type="entry name" value="ATP-synt_Fo_a_6"/>
    <property type="match status" value="1"/>
</dbReference>
<dbReference type="FunFam" id="1.20.120.220:FF:000003">
    <property type="entry name" value="ATP synthase subunit a"/>
    <property type="match status" value="1"/>
</dbReference>
<dbReference type="Gene3D" id="1.20.120.220">
    <property type="entry name" value="ATP synthase, F0 complex, subunit A"/>
    <property type="match status" value="1"/>
</dbReference>
<dbReference type="HAMAP" id="MF_01393">
    <property type="entry name" value="ATP_synth_a_bact"/>
    <property type="match status" value="1"/>
</dbReference>
<dbReference type="InterPro" id="IPR000568">
    <property type="entry name" value="ATP_synth_F0_asu"/>
</dbReference>
<dbReference type="InterPro" id="IPR023011">
    <property type="entry name" value="ATP_synth_F0_asu_AS"/>
</dbReference>
<dbReference type="InterPro" id="IPR045083">
    <property type="entry name" value="ATP_synth_F0_asu_bact/mt"/>
</dbReference>
<dbReference type="InterPro" id="IPR035908">
    <property type="entry name" value="F0_ATP_A_sf"/>
</dbReference>
<dbReference type="NCBIfam" id="TIGR01131">
    <property type="entry name" value="ATP_synt_6_or_A"/>
    <property type="match status" value="1"/>
</dbReference>
<dbReference type="NCBIfam" id="NF004482">
    <property type="entry name" value="PRK05815.2-4"/>
    <property type="match status" value="1"/>
</dbReference>
<dbReference type="PANTHER" id="PTHR11410">
    <property type="entry name" value="ATP SYNTHASE SUBUNIT A"/>
    <property type="match status" value="1"/>
</dbReference>
<dbReference type="PANTHER" id="PTHR11410:SF0">
    <property type="entry name" value="ATP SYNTHASE SUBUNIT A"/>
    <property type="match status" value="1"/>
</dbReference>
<dbReference type="Pfam" id="PF00119">
    <property type="entry name" value="ATP-synt_A"/>
    <property type="match status" value="1"/>
</dbReference>
<dbReference type="PRINTS" id="PR00123">
    <property type="entry name" value="ATPASEA"/>
</dbReference>
<dbReference type="SUPFAM" id="SSF81336">
    <property type="entry name" value="F1F0 ATP synthase subunit A"/>
    <property type="match status" value="1"/>
</dbReference>
<dbReference type="PROSITE" id="PS00449">
    <property type="entry name" value="ATPASE_A"/>
    <property type="match status" value="1"/>
</dbReference>
<reference key="1">
    <citation type="journal article" date="2010" name="Stand. Genomic Sci.">
        <title>Complete genome sequence of Rhizobium leguminosarum bv trifolii strain WSM2304, an effective microsymbiont of the South American clover Trifolium polymorphum.</title>
        <authorList>
            <person name="Reeve W."/>
            <person name="O'Hara G."/>
            <person name="Chain P."/>
            <person name="Ardley J."/>
            <person name="Brau L."/>
            <person name="Nandesena K."/>
            <person name="Tiwari R."/>
            <person name="Malfatti S."/>
            <person name="Kiss H."/>
            <person name="Lapidus A."/>
            <person name="Copeland A."/>
            <person name="Nolan M."/>
            <person name="Land M."/>
            <person name="Ivanova N."/>
            <person name="Mavromatis K."/>
            <person name="Markowitz V."/>
            <person name="Kyrpides N."/>
            <person name="Melino V."/>
            <person name="Denton M."/>
            <person name="Yates R."/>
            <person name="Howieson J."/>
        </authorList>
    </citation>
    <scope>NUCLEOTIDE SEQUENCE [LARGE SCALE GENOMIC DNA]</scope>
    <source>
        <strain>WSM2304</strain>
    </source>
</reference>
<accession>B5ZS16</accession>
<sequence>MSNDPTHQFQIFKIVPIEIGGIDFSFTNASLFMAASAAVAVGFLYFATSNRAIVPGRSQSVAEMSYEFIANMLKEGAGKQGMKFFPLVFSLFMFVLTANLLGMFPYFFTITSQIIVTFALAILVIGTVLVYGFYKHGFHFLNVFVPSGVPGILLPLVVSIEIISFLSRPISLSVRLFANMLAGHITLKVFAGFVASLGALGAVGVGGAVLPLIMTVALTGLEFLVAFLQAYVFAVLTCMYLNDAIHPGGH</sequence>
<gene>
    <name evidence="1" type="primary">atpB</name>
    <name type="ordered locus">Rleg2_0512</name>
</gene>
<comment type="function">
    <text evidence="1">Key component of the proton channel; it plays a direct role in the translocation of protons across the membrane.</text>
</comment>
<comment type="subunit">
    <text evidence="1">F-type ATPases have 2 components, CF(1) - the catalytic core - and CF(0) - the membrane proton channel. CF(1) has five subunits: alpha(3), beta(3), gamma(1), delta(1), epsilon(1). CF(0) has three main subunits: a(1), b(2) and c(9-12). The alpha and beta chains form an alternating ring which encloses part of the gamma chain. CF(1) is attached to CF(0) by a central stalk formed by the gamma and epsilon chains, while a peripheral stalk is formed by the delta and b chains.</text>
</comment>
<comment type="subcellular location">
    <subcellularLocation>
        <location evidence="1">Cell inner membrane</location>
        <topology evidence="1">Multi-pass membrane protein</topology>
    </subcellularLocation>
</comment>
<comment type="similarity">
    <text evidence="1">Belongs to the ATPase A chain family.</text>
</comment>
<organism>
    <name type="scientific">Rhizobium leguminosarum bv. trifolii (strain WSM2304)</name>
    <dbReference type="NCBI Taxonomy" id="395492"/>
    <lineage>
        <taxon>Bacteria</taxon>
        <taxon>Pseudomonadati</taxon>
        <taxon>Pseudomonadota</taxon>
        <taxon>Alphaproteobacteria</taxon>
        <taxon>Hyphomicrobiales</taxon>
        <taxon>Rhizobiaceae</taxon>
        <taxon>Rhizobium/Agrobacterium group</taxon>
        <taxon>Rhizobium</taxon>
    </lineage>
</organism>
<proteinExistence type="inferred from homology"/>
<name>ATP6_RHILW</name>
<keyword id="KW-0066">ATP synthesis</keyword>
<keyword id="KW-0997">Cell inner membrane</keyword>
<keyword id="KW-1003">Cell membrane</keyword>
<keyword id="KW-0138">CF(0)</keyword>
<keyword id="KW-0375">Hydrogen ion transport</keyword>
<keyword id="KW-0406">Ion transport</keyword>
<keyword id="KW-0472">Membrane</keyword>
<keyword id="KW-1185">Reference proteome</keyword>
<keyword id="KW-0812">Transmembrane</keyword>
<keyword id="KW-1133">Transmembrane helix</keyword>
<keyword id="KW-0813">Transport</keyword>
<protein>
    <recommendedName>
        <fullName evidence="1">ATP synthase subunit a</fullName>
    </recommendedName>
    <alternativeName>
        <fullName evidence="1">ATP synthase F0 sector subunit a</fullName>
    </alternativeName>
    <alternativeName>
        <fullName evidence="1">F-ATPase subunit 6</fullName>
    </alternativeName>
</protein>
<feature type="chain" id="PRO_1000145301" description="ATP synthase subunit a">
    <location>
        <begin position="1"/>
        <end position="250"/>
    </location>
</feature>
<feature type="transmembrane region" description="Helical" evidence="1">
    <location>
        <begin position="29"/>
        <end position="49"/>
    </location>
</feature>
<feature type="transmembrane region" description="Helical" evidence="1">
    <location>
        <begin position="84"/>
        <end position="104"/>
    </location>
</feature>
<feature type="transmembrane region" description="Helical" evidence="1">
    <location>
        <begin position="114"/>
        <end position="134"/>
    </location>
</feature>
<feature type="transmembrane region" description="Helical" evidence="1">
    <location>
        <begin position="143"/>
        <end position="163"/>
    </location>
</feature>
<feature type="transmembrane region" description="Helical" evidence="1">
    <location>
        <begin position="193"/>
        <end position="213"/>
    </location>
</feature>
<feature type="transmembrane region" description="Helical" evidence="1">
    <location>
        <begin position="216"/>
        <end position="236"/>
    </location>
</feature>